<protein>
    <recommendedName>
        <fullName evidence="1">Orotidine 5'-phosphate decarboxylase</fullName>
        <ecNumber evidence="1">4.1.1.23</ecNumber>
    </recommendedName>
    <alternativeName>
        <fullName evidence="1">OMP decarboxylase</fullName>
        <shortName evidence="1">OMPDCase</shortName>
        <shortName evidence="1">OMPdecase</shortName>
    </alternativeName>
</protein>
<keyword id="KW-0210">Decarboxylase</keyword>
<keyword id="KW-0456">Lyase</keyword>
<keyword id="KW-0665">Pyrimidine biosynthesis</keyword>
<comment type="catalytic activity">
    <reaction evidence="1">
        <text>orotidine 5'-phosphate + H(+) = UMP + CO2</text>
        <dbReference type="Rhea" id="RHEA:11596"/>
        <dbReference type="ChEBI" id="CHEBI:15378"/>
        <dbReference type="ChEBI" id="CHEBI:16526"/>
        <dbReference type="ChEBI" id="CHEBI:57538"/>
        <dbReference type="ChEBI" id="CHEBI:57865"/>
        <dbReference type="EC" id="4.1.1.23"/>
    </reaction>
</comment>
<comment type="pathway">
    <text evidence="1">Pyrimidine metabolism; UMP biosynthesis via de novo pathway; UMP from orotate: step 2/2.</text>
</comment>
<comment type="similarity">
    <text evidence="1">Belongs to the OMP decarboxylase family. Type 2 subfamily.</text>
</comment>
<dbReference type="EC" id="4.1.1.23" evidence="1"/>
<dbReference type="EMBL" id="CR626927">
    <property type="protein sequence ID" value="CAH06574.1"/>
    <property type="molecule type" value="Genomic_DNA"/>
</dbReference>
<dbReference type="RefSeq" id="WP_005796043.1">
    <property type="nucleotide sequence ID" value="NZ_UFTH01000001.1"/>
</dbReference>
<dbReference type="SMR" id="Q5LH12"/>
<dbReference type="PaxDb" id="272559-BF9343_0793"/>
<dbReference type="GeneID" id="60366942"/>
<dbReference type="KEGG" id="bfs:BF9343_0793"/>
<dbReference type="eggNOG" id="COG0284">
    <property type="taxonomic scope" value="Bacteria"/>
</dbReference>
<dbReference type="HOGENOM" id="CLU_060704_1_0_10"/>
<dbReference type="UniPathway" id="UPA00070">
    <property type="reaction ID" value="UER00120"/>
</dbReference>
<dbReference type="Proteomes" id="UP000006731">
    <property type="component" value="Chromosome"/>
</dbReference>
<dbReference type="GO" id="GO:0004590">
    <property type="term" value="F:orotidine-5'-phosphate decarboxylase activity"/>
    <property type="evidence" value="ECO:0007669"/>
    <property type="project" value="UniProtKB-UniRule"/>
</dbReference>
<dbReference type="GO" id="GO:0006207">
    <property type="term" value="P:'de novo' pyrimidine nucleobase biosynthetic process"/>
    <property type="evidence" value="ECO:0007669"/>
    <property type="project" value="InterPro"/>
</dbReference>
<dbReference type="GO" id="GO:0044205">
    <property type="term" value="P:'de novo' UMP biosynthetic process"/>
    <property type="evidence" value="ECO:0007669"/>
    <property type="project" value="UniProtKB-UniRule"/>
</dbReference>
<dbReference type="CDD" id="cd04725">
    <property type="entry name" value="OMP_decarboxylase_like"/>
    <property type="match status" value="1"/>
</dbReference>
<dbReference type="FunFam" id="3.20.20.70:FF:000157">
    <property type="entry name" value="Orotidine 5'-phosphate decarboxylase"/>
    <property type="match status" value="1"/>
</dbReference>
<dbReference type="Gene3D" id="3.20.20.70">
    <property type="entry name" value="Aldolase class I"/>
    <property type="match status" value="1"/>
</dbReference>
<dbReference type="HAMAP" id="MF_01215">
    <property type="entry name" value="OMPdecase_type2"/>
    <property type="match status" value="1"/>
</dbReference>
<dbReference type="InterPro" id="IPR013785">
    <property type="entry name" value="Aldolase_TIM"/>
</dbReference>
<dbReference type="InterPro" id="IPR011995">
    <property type="entry name" value="OMPdecase_type-2"/>
</dbReference>
<dbReference type="InterPro" id="IPR001754">
    <property type="entry name" value="OMPdeCOase_dom"/>
</dbReference>
<dbReference type="InterPro" id="IPR011060">
    <property type="entry name" value="RibuloseP-bd_barrel"/>
</dbReference>
<dbReference type="NCBIfam" id="TIGR02127">
    <property type="entry name" value="pyrF_sub2"/>
    <property type="match status" value="1"/>
</dbReference>
<dbReference type="PANTHER" id="PTHR43375">
    <property type="entry name" value="OROTIDINE 5'-PHOSPHATE DECARBOXYLASE"/>
    <property type="match status" value="1"/>
</dbReference>
<dbReference type="PANTHER" id="PTHR43375:SF1">
    <property type="entry name" value="OROTIDINE 5'-PHOSPHATE DECARBOXYLASE"/>
    <property type="match status" value="1"/>
</dbReference>
<dbReference type="Pfam" id="PF00215">
    <property type="entry name" value="OMPdecase"/>
    <property type="match status" value="1"/>
</dbReference>
<dbReference type="SMART" id="SM00934">
    <property type="entry name" value="OMPdecase"/>
    <property type="match status" value="1"/>
</dbReference>
<dbReference type="SUPFAM" id="SSF51366">
    <property type="entry name" value="Ribulose-phoshate binding barrel"/>
    <property type="match status" value="1"/>
</dbReference>
<evidence type="ECO:0000255" key="1">
    <source>
        <dbReference type="HAMAP-Rule" id="MF_01215"/>
    </source>
</evidence>
<name>PYRF_BACFN</name>
<proteinExistence type="inferred from homology"/>
<organism>
    <name type="scientific">Bacteroides fragilis (strain ATCC 25285 / DSM 2151 / CCUG 4856 / JCM 11019 / LMG 10263 / NCTC 9343 / Onslow / VPI 2553 / EN-2)</name>
    <dbReference type="NCBI Taxonomy" id="272559"/>
    <lineage>
        <taxon>Bacteria</taxon>
        <taxon>Pseudomonadati</taxon>
        <taxon>Bacteroidota</taxon>
        <taxon>Bacteroidia</taxon>
        <taxon>Bacteroidales</taxon>
        <taxon>Bacteroidaceae</taxon>
        <taxon>Bacteroides</taxon>
    </lineage>
</organism>
<sequence length="274" mass="30634">MNKQSLFENIKRKKSFLCVGLDTDIKKIPDHLLDDPDPIFAFNKAIVDATADYCIAYKPNLAFYESMGVKGWIAFEKTVNYIKENYPDQFIIADAKRGDIGNTSAMYARTFFEELDIDSVTVAPYMGEDSVTPFLSYEGKWVILLALTSNKGSHDFQLTEDANGERLFEKVLKKSQEWANDEQMMYVVGATQGRAFEDIRKIVPNHFLLVPGIGAQGGSLEEVCKYGMNSTCGLIVNSSRGIIYVDKTENFAAAARAAAKEVQEQMAEQLKAIL</sequence>
<feature type="chain" id="PRO_1000138943" description="Orotidine 5'-phosphate decarboxylase">
    <location>
        <begin position="1"/>
        <end position="274"/>
    </location>
</feature>
<feature type="active site" description="Proton donor" evidence="1">
    <location>
        <position position="96"/>
    </location>
</feature>
<accession>Q5LH12</accession>
<gene>
    <name evidence="1" type="primary">pyrF</name>
    <name type="ordered locus">BF0831</name>
</gene>
<reference key="1">
    <citation type="journal article" date="2005" name="Science">
        <title>Extensive DNA inversions in the B. fragilis genome control variable gene expression.</title>
        <authorList>
            <person name="Cerdeno-Tarraga A.-M."/>
            <person name="Patrick S."/>
            <person name="Crossman L.C."/>
            <person name="Blakely G."/>
            <person name="Abratt V."/>
            <person name="Lennard N."/>
            <person name="Poxton I."/>
            <person name="Duerden B."/>
            <person name="Harris B."/>
            <person name="Quail M.A."/>
            <person name="Barron A."/>
            <person name="Clark L."/>
            <person name="Corton C."/>
            <person name="Doggett J."/>
            <person name="Holden M.T.G."/>
            <person name="Larke N."/>
            <person name="Line A."/>
            <person name="Lord A."/>
            <person name="Norbertczak H."/>
            <person name="Ormond D."/>
            <person name="Price C."/>
            <person name="Rabbinowitsch E."/>
            <person name="Woodward J."/>
            <person name="Barrell B.G."/>
            <person name="Parkhill J."/>
        </authorList>
    </citation>
    <scope>NUCLEOTIDE SEQUENCE [LARGE SCALE GENOMIC DNA]</scope>
    <source>
        <strain>ATCC 25285 / DSM 2151 / CCUG 4856 / JCM 11019 / LMG 10263 / NCTC 9343 / Onslow / VPI 2553 / EN-2</strain>
    </source>
</reference>